<name>FTHS_STRZT</name>
<sequence>MKTDIEIAQSIELKPIVDVVEKLGISYDDLELYGKYKAKLSFDKIRAVESNPVGKLILVTAINPTPAGEGKSTLTIGLADALNKIGKKTMIAIREPSLGPVMGIKGGAAGGGYAQVLPMEDINLHFTGDMHAITTANNALSALIDNHLHQGNELGIDQRRILWKRVVDLNDRALRHVTVGLGGPLNGIPREDGFDITVASEIMAILCLATDIEDLKRRLANIVIGYRYDRTPVSVGDLQVEGALALILKDAIKPNLVQTIYGTPAFVHGGPFANIAHGCNSVLATTTALHLADYTVTEAGFGADLGAEKFLDIKTPNLPTSPDAVVIVATLRALKMNGGVAKDALTEENVEAVRAGFANLKRHVENIRKFGIPAVVAINEFVSDTEAEIAALKELCASIDVPVELASVWADGAEGGVALAETVVKTIAENPANYKRLYDNDLSVQEKIEKIVTEIYRGSKVNFEKKAQTQIAQIVQNGWDKLPICMAKTQYSFSDNPNALGAPENFEITIRELVPKLGAGFIVALTGDVMTMPGLPKRPAALNMDVESDGTVLGLF</sequence>
<proteinExistence type="inferred from homology"/>
<comment type="catalytic activity">
    <reaction evidence="1">
        <text>(6S)-5,6,7,8-tetrahydrofolate + formate + ATP = (6R)-10-formyltetrahydrofolate + ADP + phosphate</text>
        <dbReference type="Rhea" id="RHEA:20221"/>
        <dbReference type="ChEBI" id="CHEBI:15740"/>
        <dbReference type="ChEBI" id="CHEBI:30616"/>
        <dbReference type="ChEBI" id="CHEBI:43474"/>
        <dbReference type="ChEBI" id="CHEBI:57453"/>
        <dbReference type="ChEBI" id="CHEBI:195366"/>
        <dbReference type="ChEBI" id="CHEBI:456216"/>
        <dbReference type="EC" id="6.3.4.3"/>
    </reaction>
</comment>
<comment type="pathway">
    <text evidence="1">One-carbon metabolism; tetrahydrofolate interconversion.</text>
</comment>
<comment type="similarity">
    <text evidence="1">Belongs to the formate--tetrahydrofolate ligase family.</text>
</comment>
<protein>
    <recommendedName>
        <fullName evidence="1">Formate--tetrahydrofolate ligase</fullName>
        <ecNumber evidence="1">6.3.4.3</ecNumber>
    </recommendedName>
    <alternativeName>
        <fullName evidence="1">Formyltetrahydrofolate synthetase</fullName>
        <shortName evidence="1">FHS</shortName>
        <shortName evidence="1">FTHFS</shortName>
    </alternativeName>
</protein>
<reference key="1">
    <citation type="journal article" date="2010" name="Genome Biol.">
        <title>Structure and dynamics of the pan-genome of Streptococcus pneumoniae and closely related species.</title>
        <authorList>
            <person name="Donati C."/>
            <person name="Hiller N.L."/>
            <person name="Tettelin H."/>
            <person name="Muzzi A."/>
            <person name="Croucher N.J."/>
            <person name="Angiuoli S.V."/>
            <person name="Oggioni M."/>
            <person name="Dunning Hotopp J.C."/>
            <person name="Hu F.Z."/>
            <person name="Riley D.R."/>
            <person name="Covacci A."/>
            <person name="Mitchell T.J."/>
            <person name="Bentley S.D."/>
            <person name="Kilian M."/>
            <person name="Ehrlich G.D."/>
            <person name="Rappuoli R."/>
            <person name="Moxon E.R."/>
            <person name="Masignani V."/>
        </authorList>
    </citation>
    <scope>NUCLEOTIDE SEQUENCE [LARGE SCALE GENOMIC DNA]</scope>
    <source>
        <strain>Taiwan19F-14</strain>
    </source>
</reference>
<dbReference type="EC" id="6.3.4.3" evidence="1"/>
<dbReference type="EMBL" id="CP000921">
    <property type="protein sequence ID" value="ACO22227.1"/>
    <property type="molecule type" value="Genomic_DNA"/>
</dbReference>
<dbReference type="RefSeq" id="WP_000845287.1">
    <property type="nucleotide sequence ID" value="NC_012469.1"/>
</dbReference>
<dbReference type="SMR" id="C1CR74"/>
<dbReference type="KEGG" id="snt:SPT_0999"/>
<dbReference type="HOGENOM" id="CLU_003601_3_3_9"/>
<dbReference type="UniPathway" id="UPA00193"/>
<dbReference type="GO" id="GO:0005524">
    <property type="term" value="F:ATP binding"/>
    <property type="evidence" value="ECO:0007669"/>
    <property type="project" value="UniProtKB-UniRule"/>
</dbReference>
<dbReference type="GO" id="GO:0004329">
    <property type="term" value="F:formate-tetrahydrofolate ligase activity"/>
    <property type="evidence" value="ECO:0007669"/>
    <property type="project" value="UniProtKB-UniRule"/>
</dbReference>
<dbReference type="GO" id="GO:0035999">
    <property type="term" value="P:tetrahydrofolate interconversion"/>
    <property type="evidence" value="ECO:0007669"/>
    <property type="project" value="UniProtKB-UniRule"/>
</dbReference>
<dbReference type="CDD" id="cd00477">
    <property type="entry name" value="FTHFS"/>
    <property type="match status" value="1"/>
</dbReference>
<dbReference type="FunFam" id="3.30.1510.10:FF:000001">
    <property type="entry name" value="Formate--tetrahydrofolate ligase"/>
    <property type="match status" value="1"/>
</dbReference>
<dbReference type="FunFam" id="3.10.410.10:FF:000001">
    <property type="entry name" value="Putative formate--tetrahydrofolate ligase"/>
    <property type="match status" value="1"/>
</dbReference>
<dbReference type="Gene3D" id="3.30.1510.10">
    <property type="entry name" value="Domain 2, N(10)-formyltetrahydrofolate synthetase"/>
    <property type="match status" value="1"/>
</dbReference>
<dbReference type="Gene3D" id="3.10.410.10">
    <property type="entry name" value="Formyltetrahydrofolate synthetase, domain 3"/>
    <property type="match status" value="1"/>
</dbReference>
<dbReference type="Gene3D" id="3.40.50.300">
    <property type="entry name" value="P-loop containing nucleotide triphosphate hydrolases"/>
    <property type="match status" value="1"/>
</dbReference>
<dbReference type="HAMAP" id="MF_01543">
    <property type="entry name" value="FTHFS"/>
    <property type="match status" value="1"/>
</dbReference>
<dbReference type="InterPro" id="IPR000559">
    <property type="entry name" value="Formate_THF_ligase"/>
</dbReference>
<dbReference type="InterPro" id="IPR020628">
    <property type="entry name" value="Formate_THF_ligase_CS"/>
</dbReference>
<dbReference type="InterPro" id="IPR027417">
    <property type="entry name" value="P-loop_NTPase"/>
</dbReference>
<dbReference type="NCBIfam" id="NF010030">
    <property type="entry name" value="PRK13505.1"/>
    <property type="match status" value="1"/>
</dbReference>
<dbReference type="Pfam" id="PF01268">
    <property type="entry name" value="FTHFS"/>
    <property type="match status" value="1"/>
</dbReference>
<dbReference type="SUPFAM" id="SSF52540">
    <property type="entry name" value="P-loop containing nucleoside triphosphate hydrolases"/>
    <property type="match status" value="1"/>
</dbReference>
<dbReference type="PROSITE" id="PS00721">
    <property type="entry name" value="FTHFS_1"/>
    <property type="match status" value="1"/>
</dbReference>
<dbReference type="PROSITE" id="PS00722">
    <property type="entry name" value="FTHFS_2"/>
    <property type="match status" value="1"/>
</dbReference>
<evidence type="ECO:0000255" key="1">
    <source>
        <dbReference type="HAMAP-Rule" id="MF_01543"/>
    </source>
</evidence>
<keyword id="KW-0067">ATP-binding</keyword>
<keyword id="KW-0436">Ligase</keyword>
<keyword id="KW-0547">Nucleotide-binding</keyword>
<keyword id="KW-0554">One-carbon metabolism</keyword>
<organism>
    <name type="scientific">Streptococcus pneumoniae (strain Taiwan19F-14)</name>
    <dbReference type="NCBI Taxonomy" id="487213"/>
    <lineage>
        <taxon>Bacteria</taxon>
        <taxon>Bacillati</taxon>
        <taxon>Bacillota</taxon>
        <taxon>Bacilli</taxon>
        <taxon>Lactobacillales</taxon>
        <taxon>Streptococcaceae</taxon>
        <taxon>Streptococcus</taxon>
    </lineage>
</organism>
<accession>C1CR74</accession>
<feature type="chain" id="PRO_1000185270" description="Formate--tetrahydrofolate ligase">
    <location>
        <begin position="1"/>
        <end position="556"/>
    </location>
</feature>
<feature type="binding site" evidence="1">
    <location>
        <begin position="65"/>
        <end position="72"/>
    </location>
    <ligand>
        <name>ATP</name>
        <dbReference type="ChEBI" id="CHEBI:30616"/>
    </ligand>
</feature>
<gene>
    <name evidence="1" type="primary">fhs</name>
    <name type="ordered locus">SPT_0999</name>
</gene>